<comment type="function">
    <text evidence="2">Carboxylesterase involved in the biosynthesis of the benzylisoquinoline alkaloid noscapine (PubMed:25485687). Converts 3-O-acetylpapaveroxine to narcotine hemiacetal (PubMed:25485687).</text>
</comment>
<comment type="catalytic activity">
    <reaction evidence="2">
        <text>3-O-acetylpapaveroxine + H2O = narcotine hemiacetal + acetate + H(+)</text>
        <dbReference type="Rhea" id="RHEA:57400"/>
        <dbReference type="ChEBI" id="CHEBI:15377"/>
        <dbReference type="ChEBI" id="CHEBI:15378"/>
        <dbReference type="ChEBI" id="CHEBI:30089"/>
        <dbReference type="ChEBI" id="CHEBI:141645"/>
        <dbReference type="ChEBI" id="CHEBI:141667"/>
        <dbReference type="EC" id="3.1.1.105"/>
    </reaction>
    <physiologicalReaction direction="left-to-right" evidence="5">
        <dbReference type="Rhea" id="RHEA:57401"/>
    </physiologicalReaction>
</comment>
<comment type="biophysicochemical properties">
    <kinetics>
        <KM evidence="2">25.2 uM for 3-O-acetylpapaveroxine</KM>
        <Vmax evidence="2">1535.0 nmol/min/mg enzyme with 3-O-acetylpapaveroxine as substrate</Vmax>
    </kinetics>
</comment>
<comment type="pathway">
    <text evidence="4">Alkaloid biosynthesis.</text>
</comment>
<comment type="similarity">
    <text evidence="4">Belongs to the 'GDXG' lipolytic enzyme family.</text>
</comment>
<gene>
    <name evidence="3" type="primary">CXE2</name>
</gene>
<reference key="1">
    <citation type="journal article" date="2015" name="Nat. Chem. Biol.">
        <title>Acetylation serves as a protective group in noscapine biosynthesis in opium poppy.</title>
        <authorList>
            <person name="Dang T.T."/>
            <person name="Chen X."/>
            <person name="Facchini P.J."/>
        </authorList>
    </citation>
    <scope>NUCLEOTIDE SEQUENCE [MRNA]</scope>
    <scope>FUNCTION</scope>
    <scope>CATALYTIC ACTIVITY</scope>
    <scope>BIOPHYSICOCHEMICAL PROPERTIES</scope>
</reference>
<evidence type="ECO:0000250" key="1">
    <source>
        <dbReference type="UniProtKB" id="Q5NUF3"/>
    </source>
</evidence>
<evidence type="ECO:0000269" key="2">
    <source>
    </source>
</evidence>
<evidence type="ECO:0000303" key="3">
    <source>
    </source>
</evidence>
<evidence type="ECO:0000305" key="4"/>
<evidence type="ECO:0000305" key="5">
    <source>
    </source>
</evidence>
<organism>
    <name type="scientific">Papaver somniferum</name>
    <name type="common">Opium poppy</name>
    <dbReference type="NCBI Taxonomy" id="3469"/>
    <lineage>
        <taxon>Eukaryota</taxon>
        <taxon>Viridiplantae</taxon>
        <taxon>Streptophyta</taxon>
        <taxon>Embryophyta</taxon>
        <taxon>Tracheophyta</taxon>
        <taxon>Spermatophyta</taxon>
        <taxon>Magnoliopsida</taxon>
        <taxon>Ranunculales</taxon>
        <taxon>Papaveraceae</taxon>
        <taxon>Papaveroideae</taxon>
        <taxon>Papaver</taxon>
    </lineage>
</organism>
<proteinExistence type="evidence at protein level"/>
<feature type="chain" id="PRO_0000447603" description="3-O-acetylpapaveroxine carboxylesterase CXE2">
    <location>
        <begin position="1"/>
        <end position="313"/>
    </location>
</feature>
<feature type="short sequence motif" description="Involved in the stabilization of the negatively charged intermediate by the formation of the oxyanion hole" evidence="1">
    <location>
        <begin position="72"/>
        <end position="74"/>
    </location>
</feature>
<feature type="active site" evidence="1">
    <location>
        <position position="158"/>
    </location>
</feature>
<feature type="active site" evidence="1">
    <location>
        <position position="262"/>
    </location>
</feature>
<feature type="active site" evidence="1">
    <location>
        <position position="292"/>
    </location>
</feature>
<dbReference type="EC" id="3.1.1.105" evidence="2"/>
<dbReference type="EMBL" id="KJ890443">
    <property type="protein sequence ID" value="AIY34373.1"/>
    <property type="molecule type" value="mRNA"/>
</dbReference>
<dbReference type="SMR" id="A0A0A1EQ07"/>
<dbReference type="ESTHER" id="papso-cxe2">
    <property type="family name" value="Plant_carboxylesterase"/>
</dbReference>
<dbReference type="EnsemblPlants" id="RZC84724">
    <property type="protein sequence ID" value="RZC84724"/>
    <property type="gene ID" value="C5167_047503"/>
</dbReference>
<dbReference type="Gramene" id="RZC84724">
    <property type="protein sequence ID" value="RZC84724"/>
    <property type="gene ID" value="C5167_047503"/>
</dbReference>
<dbReference type="OMA" id="AGRNHEY"/>
<dbReference type="OrthoDB" id="408631at2759"/>
<dbReference type="BRENDA" id="3.1.1.105">
    <property type="organism ID" value="4515"/>
</dbReference>
<dbReference type="SABIO-RK" id="A0A0A1EQ07"/>
<dbReference type="GO" id="GO:0016787">
    <property type="term" value="F:hydrolase activity"/>
    <property type="evidence" value="ECO:0007669"/>
    <property type="project" value="UniProtKB-KW"/>
</dbReference>
<dbReference type="GO" id="GO:0009820">
    <property type="term" value="P:alkaloid metabolic process"/>
    <property type="evidence" value="ECO:0007669"/>
    <property type="project" value="UniProtKB-KW"/>
</dbReference>
<dbReference type="Gene3D" id="3.40.50.1820">
    <property type="entry name" value="alpha/beta hydrolase"/>
    <property type="match status" value="1"/>
</dbReference>
<dbReference type="InterPro" id="IPR013094">
    <property type="entry name" value="AB_hydrolase_3"/>
</dbReference>
<dbReference type="InterPro" id="IPR029058">
    <property type="entry name" value="AB_hydrolase_fold"/>
</dbReference>
<dbReference type="InterPro" id="IPR050466">
    <property type="entry name" value="Carboxylest/Gibb_receptor"/>
</dbReference>
<dbReference type="InterPro" id="IPR002168">
    <property type="entry name" value="Lipase_GDXG_HIS_AS"/>
</dbReference>
<dbReference type="PANTHER" id="PTHR23024">
    <property type="entry name" value="ARYLACETAMIDE DEACETYLASE"/>
    <property type="match status" value="1"/>
</dbReference>
<dbReference type="PANTHER" id="PTHR23024:SF546">
    <property type="entry name" value="CARBOXYLESTERASE 120-RELATED"/>
    <property type="match status" value="1"/>
</dbReference>
<dbReference type="Pfam" id="PF07859">
    <property type="entry name" value="Abhydrolase_3"/>
    <property type="match status" value="1"/>
</dbReference>
<dbReference type="SUPFAM" id="SSF53474">
    <property type="entry name" value="alpha/beta-Hydrolases"/>
    <property type="match status" value="1"/>
</dbReference>
<dbReference type="PROSITE" id="PS01173">
    <property type="entry name" value="LIPASE_GDXG_HIS"/>
    <property type="match status" value="1"/>
</dbReference>
<keyword id="KW-0017">Alkaloid metabolism</keyword>
<keyword id="KW-0378">Hydrolase</keyword>
<accession>A0A0A1EQ07</accession>
<sequence length="313" mass="35154">MADPYEFLMCIHDPEEDTLTRNFPIPATPLDQNTKDISLNLDRKTSLRIFRPPTEEFCVTTNKLLPIIIYFHGGGFVLFNADSTINHDFCQSIATHLPALVVSVDYRLAPENRLPAAYDDAVDALNWVKDQGLGKLNNSEVWLKEYGDFSKCFIMGCSSGGNIAYHASLRAIEMDLEPVIINGLILHSPFFGSLQRTESDLKVINDQDLPLAVRDVMWELALPLGSSRDHVYCNPNIANDGSSSGNMAGLIKRCLVIGFYGDPLIDRQIQLVKMLEEKGVKVETWIEQEGYHGVPCFDPKIRETLLGKIKYFI</sequence>
<name>CXE2_PAPSO</name>
<protein>
    <recommendedName>
        <fullName evidence="4">3-O-acetylpapaveroxine carboxylesterase CXE2</fullName>
        <ecNumber evidence="2">3.1.1.105</ecNumber>
    </recommendedName>
    <alternativeName>
        <fullName evidence="3">Carboxylesterase 2</fullName>
    </alternativeName>
</protein>